<accession>B3QK65</accession>
<name>MQO_RHOPT</name>
<protein>
    <recommendedName>
        <fullName evidence="1">Probable malate:quinone oxidoreductase</fullName>
        <ecNumber evidence="1">1.1.5.4</ecNumber>
    </recommendedName>
    <alternativeName>
        <fullName evidence="1">MQO</fullName>
    </alternativeName>
    <alternativeName>
        <fullName evidence="1">Malate dehydrogenase [quinone]</fullName>
    </alternativeName>
</protein>
<feature type="chain" id="PRO_1000099880" description="Probable malate:quinone oxidoreductase">
    <location>
        <begin position="1"/>
        <end position="497"/>
    </location>
</feature>
<gene>
    <name evidence="1" type="primary">mqo</name>
    <name type="ordered locus">Rpal_1548</name>
</gene>
<evidence type="ECO:0000255" key="1">
    <source>
        <dbReference type="HAMAP-Rule" id="MF_00212"/>
    </source>
</evidence>
<sequence length="497" mass="54182">MSQIPETSDIVLIGAGIMSATLGTVLKELEPSLSVTMFETLHDCGQESSQAWNNAGTGHAANCELNYTPQRSDGSVDISKALEVNTEFDISRQLWAHLVGKGAIPDPRAFLHPCPHMSFVWGDDNVAFLRQRHREMAAHHCYHGMEFSEDPAQIAAWAPLIIEGREPGQPIAATRIISGADVDYGALTHLLVKQLQAQSGFSVHYKHRVVALARGADGRWLVTVENVTTYERSTTSARFVFAGAGGGSLDILQKSGIPEGNGYAGFPVSGIWLRCDVDDISARHHAKVYGKAAHGSPPMSVPHLDTRIIGGKRSLLFGPYAGFSSKFLKHGSYADLLRSIEPGNILPMLAVARDDWQLSEYLIGQVLQTSEHQFAALQGFFPRAQREDWQRAVAGQRVQIIKPDPQHTGVLEFGTELLASADKSFVALLGASPGASTAAFIAMEVLQKCFDDRLTPDAWLGRLKQMIPTYGIDLKKDADACRDSRAKTAKVLQLDFV</sequence>
<reference key="1">
    <citation type="submission" date="2008-05" db="EMBL/GenBank/DDBJ databases">
        <title>Complete sequence of Rhodopseudomonas palustris TIE-1.</title>
        <authorList>
            <consortium name="US DOE Joint Genome Institute"/>
            <person name="Lucas S."/>
            <person name="Copeland A."/>
            <person name="Lapidus A."/>
            <person name="Glavina del Rio T."/>
            <person name="Dalin E."/>
            <person name="Tice H."/>
            <person name="Pitluck S."/>
            <person name="Chain P."/>
            <person name="Malfatti S."/>
            <person name="Shin M."/>
            <person name="Vergez L."/>
            <person name="Lang D."/>
            <person name="Schmutz J."/>
            <person name="Larimer F."/>
            <person name="Land M."/>
            <person name="Hauser L."/>
            <person name="Kyrpides N."/>
            <person name="Mikhailova N."/>
            <person name="Emerson D."/>
            <person name="Newman D.K."/>
            <person name="Roden E."/>
            <person name="Richardson P."/>
        </authorList>
    </citation>
    <scope>NUCLEOTIDE SEQUENCE [LARGE SCALE GENOMIC DNA]</scope>
    <source>
        <strain>TIE-1</strain>
    </source>
</reference>
<organism>
    <name type="scientific">Rhodopseudomonas palustris (strain TIE-1)</name>
    <dbReference type="NCBI Taxonomy" id="395960"/>
    <lineage>
        <taxon>Bacteria</taxon>
        <taxon>Pseudomonadati</taxon>
        <taxon>Pseudomonadota</taxon>
        <taxon>Alphaproteobacteria</taxon>
        <taxon>Hyphomicrobiales</taxon>
        <taxon>Nitrobacteraceae</taxon>
        <taxon>Rhodopseudomonas</taxon>
    </lineage>
</organism>
<proteinExistence type="inferred from homology"/>
<dbReference type="EC" id="1.1.5.4" evidence="1"/>
<dbReference type="EMBL" id="CP001096">
    <property type="protein sequence ID" value="ACF00082.1"/>
    <property type="molecule type" value="Genomic_DNA"/>
</dbReference>
<dbReference type="RefSeq" id="WP_012495008.1">
    <property type="nucleotide sequence ID" value="NC_011004.1"/>
</dbReference>
<dbReference type="SMR" id="B3QK65"/>
<dbReference type="KEGG" id="rpt:Rpal_1548"/>
<dbReference type="HOGENOM" id="CLU_028151_0_0_5"/>
<dbReference type="OrthoDB" id="9763983at2"/>
<dbReference type="UniPathway" id="UPA00223">
    <property type="reaction ID" value="UER01008"/>
</dbReference>
<dbReference type="Proteomes" id="UP000001725">
    <property type="component" value="Chromosome"/>
</dbReference>
<dbReference type="GO" id="GO:0047545">
    <property type="term" value="F:2-hydroxyglutarate dehydrogenase activity"/>
    <property type="evidence" value="ECO:0007669"/>
    <property type="project" value="TreeGrafter"/>
</dbReference>
<dbReference type="GO" id="GO:0008924">
    <property type="term" value="F:L-malate dehydrogenase (quinone) activity"/>
    <property type="evidence" value="ECO:0007669"/>
    <property type="project" value="UniProtKB-UniRule"/>
</dbReference>
<dbReference type="GO" id="GO:0006099">
    <property type="term" value="P:tricarboxylic acid cycle"/>
    <property type="evidence" value="ECO:0007669"/>
    <property type="project" value="UniProtKB-UniRule"/>
</dbReference>
<dbReference type="Gene3D" id="3.30.9.10">
    <property type="entry name" value="D-Amino Acid Oxidase, subunit A, domain 2"/>
    <property type="match status" value="1"/>
</dbReference>
<dbReference type="Gene3D" id="3.50.50.60">
    <property type="entry name" value="FAD/NAD(P)-binding domain"/>
    <property type="match status" value="1"/>
</dbReference>
<dbReference type="HAMAP" id="MF_00212">
    <property type="entry name" value="MQO"/>
    <property type="match status" value="1"/>
</dbReference>
<dbReference type="InterPro" id="IPR036188">
    <property type="entry name" value="FAD/NAD-bd_sf"/>
</dbReference>
<dbReference type="InterPro" id="IPR006231">
    <property type="entry name" value="MQO"/>
</dbReference>
<dbReference type="NCBIfam" id="TIGR01320">
    <property type="entry name" value="mal_quin_oxido"/>
    <property type="match status" value="1"/>
</dbReference>
<dbReference type="NCBIfam" id="NF003603">
    <property type="entry name" value="PRK05257.1-1"/>
    <property type="match status" value="1"/>
</dbReference>
<dbReference type="NCBIfam" id="NF003605">
    <property type="entry name" value="PRK05257.1-4"/>
    <property type="match status" value="1"/>
</dbReference>
<dbReference type="NCBIfam" id="NF003606">
    <property type="entry name" value="PRK05257.2-1"/>
    <property type="match status" value="1"/>
</dbReference>
<dbReference type="NCBIfam" id="NF003608">
    <property type="entry name" value="PRK05257.2-4"/>
    <property type="match status" value="1"/>
</dbReference>
<dbReference type="NCBIfam" id="NF003611">
    <property type="entry name" value="PRK05257.3-2"/>
    <property type="match status" value="1"/>
</dbReference>
<dbReference type="NCBIfam" id="NF009875">
    <property type="entry name" value="PRK13339.1"/>
    <property type="match status" value="1"/>
</dbReference>
<dbReference type="PANTHER" id="PTHR43104">
    <property type="entry name" value="L-2-HYDROXYGLUTARATE DEHYDROGENASE, MITOCHONDRIAL"/>
    <property type="match status" value="1"/>
</dbReference>
<dbReference type="PANTHER" id="PTHR43104:SF2">
    <property type="entry name" value="L-2-HYDROXYGLUTARATE DEHYDROGENASE, MITOCHONDRIAL"/>
    <property type="match status" value="1"/>
</dbReference>
<dbReference type="Pfam" id="PF06039">
    <property type="entry name" value="Mqo"/>
    <property type="match status" value="1"/>
</dbReference>
<dbReference type="SUPFAM" id="SSF51905">
    <property type="entry name" value="FAD/NAD(P)-binding domain"/>
    <property type="match status" value="1"/>
</dbReference>
<keyword id="KW-0274">FAD</keyword>
<keyword id="KW-0285">Flavoprotein</keyword>
<keyword id="KW-0560">Oxidoreductase</keyword>
<keyword id="KW-0816">Tricarboxylic acid cycle</keyword>
<comment type="catalytic activity">
    <reaction evidence="1">
        <text>(S)-malate + a quinone = a quinol + oxaloacetate</text>
        <dbReference type="Rhea" id="RHEA:46012"/>
        <dbReference type="ChEBI" id="CHEBI:15589"/>
        <dbReference type="ChEBI" id="CHEBI:16452"/>
        <dbReference type="ChEBI" id="CHEBI:24646"/>
        <dbReference type="ChEBI" id="CHEBI:132124"/>
        <dbReference type="EC" id="1.1.5.4"/>
    </reaction>
</comment>
<comment type="cofactor">
    <cofactor evidence="1">
        <name>FAD</name>
        <dbReference type="ChEBI" id="CHEBI:57692"/>
    </cofactor>
</comment>
<comment type="pathway">
    <text evidence="1">Carbohydrate metabolism; tricarboxylic acid cycle; oxaloacetate from (S)-malate (quinone route): step 1/1.</text>
</comment>
<comment type="similarity">
    <text evidence="1">Belongs to the MQO family.</text>
</comment>